<gene>
    <name evidence="1" type="primary">atpA</name>
    <name type="ordered locus">ECIAI1_3918</name>
</gene>
<sequence>MQLNSTEISELIKQRIAQFNVVSEAHNEGTIVSVSDGVIRIHGLADCMQGEMISLPGNRYAIALNLERDSVGAVVMGPYADLAEGMKVKCTGRILEVPVGRGLLGRVVNTLGAPIDGKGPLDHDGFSAVEAIAPGVIERQSVDQPVQTGYKAVDSMIPIGRGQRELIIGDRQTGKTALAIDAIINQRDSGIKCIYVAIGQKASTISNVVRKLEEHGALANTIVVVATASESAALQYLAPYAGCAMGEYFRDRGEDALIIYDDLSKQAVAYRQISLLLRRPPGREAFPGDVFYLHSRLLERAARVNAEYVEAFTKGEVKGKTGSLTALPIIETQAGDVSAFVPTNVISITDGQIFLETNLFNAGIRPAVNPGISVSRVGGAAQTKIMKKLSGGIRTALAQYRELAAFSQFASDLDDATRKQLDHGQKVTELLKQKQYAPMSVAQQSLVLFAAERGYLADVELSKIGSFEAALLAYVDRDHAPLMQEINQTGGYNDEIEGKLKGILDSFKATQSW</sequence>
<dbReference type="EC" id="7.1.2.2" evidence="1"/>
<dbReference type="EMBL" id="CU928160">
    <property type="protein sequence ID" value="CAR00712.1"/>
    <property type="molecule type" value="Genomic_DNA"/>
</dbReference>
<dbReference type="RefSeq" id="WP_001176745.1">
    <property type="nucleotide sequence ID" value="NC_011741.1"/>
</dbReference>
<dbReference type="SMR" id="B7M590"/>
<dbReference type="GeneID" id="93778233"/>
<dbReference type="KEGG" id="ecr:ECIAI1_3918"/>
<dbReference type="HOGENOM" id="CLU_010091_2_1_6"/>
<dbReference type="GO" id="GO:0005886">
    <property type="term" value="C:plasma membrane"/>
    <property type="evidence" value="ECO:0007669"/>
    <property type="project" value="UniProtKB-SubCell"/>
</dbReference>
<dbReference type="GO" id="GO:0045259">
    <property type="term" value="C:proton-transporting ATP synthase complex"/>
    <property type="evidence" value="ECO:0007669"/>
    <property type="project" value="UniProtKB-KW"/>
</dbReference>
<dbReference type="GO" id="GO:0043531">
    <property type="term" value="F:ADP binding"/>
    <property type="evidence" value="ECO:0007669"/>
    <property type="project" value="TreeGrafter"/>
</dbReference>
<dbReference type="GO" id="GO:0005524">
    <property type="term" value="F:ATP binding"/>
    <property type="evidence" value="ECO:0007669"/>
    <property type="project" value="UniProtKB-UniRule"/>
</dbReference>
<dbReference type="GO" id="GO:0046933">
    <property type="term" value="F:proton-transporting ATP synthase activity, rotational mechanism"/>
    <property type="evidence" value="ECO:0007669"/>
    <property type="project" value="UniProtKB-UniRule"/>
</dbReference>
<dbReference type="CDD" id="cd18113">
    <property type="entry name" value="ATP-synt_F1_alpha_C"/>
    <property type="match status" value="1"/>
</dbReference>
<dbReference type="CDD" id="cd18116">
    <property type="entry name" value="ATP-synt_F1_alpha_N"/>
    <property type="match status" value="1"/>
</dbReference>
<dbReference type="CDD" id="cd01132">
    <property type="entry name" value="F1-ATPase_alpha_CD"/>
    <property type="match status" value="1"/>
</dbReference>
<dbReference type="FunFam" id="1.20.150.20:FF:000001">
    <property type="entry name" value="ATP synthase subunit alpha"/>
    <property type="match status" value="1"/>
</dbReference>
<dbReference type="FunFam" id="2.40.30.20:FF:000001">
    <property type="entry name" value="ATP synthase subunit alpha"/>
    <property type="match status" value="1"/>
</dbReference>
<dbReference type="FunFam" id="3.40.50.300:FF:000002">
    <property type="entry name" value="ATP synthase subunit alpha"/>
    <property type="match status" value="1"/>
</dbReference>
<dbReference type="Gene3D" id="2.40.30.20">
    <property type="match status" value="1"/>
</dbReference>
<dbReference type="Gene3D" id="1.20.150.20">
    <property type="entry name" value="ATP synthase alpha/beta chain, C-terminal domain"/>
    <property type="match status" value="1"/>
</dbReference>
<dbReference type="Gene3D" id="3.40.50.300">
    <property type="entry name" value="P-loop containing nucleotide triphosphate hydrolases"/>
    <property type="match status" value="1"/>
</dbReference>
<dbReference type="HAMAP" id="MF_01346">
    <property type="entry name" value="ATP_synth_alpha_bact"/>
    <property type="match status" value="1"/>
</dbReference>
<dbReference type="InterPro" id="IPR023366">
    <property type="entry name" value="ATP_synth_asu-like_sf"/>
</dbReference>
<dbReference type="InterPro" id="IPR000793">
    <property type="entry name" value="ATP_synth_asu_C"/>
</dbReference>
<dbReference type="InterPro" id="IPR038376">
    <property type="entry name" value="ATP_synth_asu_C_sf"/>
</dbReference>
<dbReference type="InterPro" id="IPR033732">
    <property type="entry name" value="ATP_synth_F1_a_nt-bd_dom"/>
</dbReference>
<dbReference type="InterPro" id="IPR005294">
    <property type="entry name" value="ATP_synth_F1_asu"/>
</dbReference>
<dbReference type="InterPro" id="IPR020003">
    <property type="entry name" value="ATPase_a/bsu_AS"/>
</dbReference>
<dbReference type="InterPro" id="IPR004100">
    <property type="entry name" value="ATPase_F1/V1/A1_a/bsu_N"/>
</dbReference>
<dbReference type="InterPro" id="IPR036121">
    <property type="entry name" value="ATPase_F1/V1/A1_a/bsu_N_sf"/>
</dbReference>
<dbReference type="InterPro" id="IPR000194">
    <property type="entry name" value="ATPase_F1/V1/A1_a/bsu_nucl-bd"/>
</dbReference>
<dbReference type="InterPro" id="IPR027417">
    <property type="entry name" value="P-loop_NTPase"/>
</dbReference>
<dbReference type="NCBIfam" id="TIGR00962">
    <property type="entry name" value="atpA"/>
    <property type="match status" value="1"/>
</dbReference>
<dbReference type="NCBIfam" id="NF009884">
    <property type="entry name" value="PRK13343.1"/>
    <property type="match status" value="1"/>
</dbReference>
<dbReference type="PANTHER" id="PTHR48082">
    <property type="entry name" value="ATP SYNTHASE SUBUNIT ALPHA, MITOCHONDRIAL"/>
    <property type="match status" value="1"/>
</dbReference>
<dbReference type="PANTHER" id="PTHR48082:SF2">
    <property type="entry name" value="ATP SYNTHASE SUBUNIT ALPHA, MITOCHONDRIAL"/>
    <property type="match status" value="1"/>
</dbReference>
<dbReference type="Pfam" id="PF00006">
    <property type="entry name" value="ATP-synt_ab"/>
    <property type="match status" value="1"/>
</dbReference>
<dbReference type="Pfam" id="PF00306">
    <property type="entry name" value="ATP-synt_ab_C"/>
    <property type="match status" value="1"/>
</dbReference>
<dbReference type="Pfam" id="PF02874">
    <property type="entry name" value="ATP-synt_ab_N"/>
    <property type="match status" value="1"/>
</dbReference>
<dbReference type="SUPFAM" id="SSF47917">
    <property type="entry name" value="C-terminal domain of alpha and beta subunits of F1 ATP synthase"/>
    <property type="match status" value="1"/>
</dbReference>
<dbReference type="SUPFAM" id="SSF50615">
    <property type="entry name" value="N-terminal domain of alpha and beta subunits of F1 ATP synthase"/>
    <property type="match status" value="1"/>
</dbReference>
<dbReference type="SUPFAM" id="SSF52540">
    <property type="entry name" value="P-loop containing nucleoside triphosphate hydrolases"/>
    <property type="match status" value="1"/>
</dbReference>
<dbReference type="PROSITE" id="PS00152">
    <property type="entry name" value="ATPASE_ALPHA_BETA"/>
    <property type="match status" value="1"/>
</dbReference>
<feature type="chain" id="PRO_1000143375" description="ATP synthase subunit alpha">
    <location>
        <begin position="1"/>
        <end position="513"/>
    </location>
</feature>
<feature type="binding site" evidence="1">
    <location>
        <begin position="169"/>
        <end position="176"/>
    </location>
    <ligand>
        <name>ATP</name>
        <dbReference type="ChEBI" id="CHEBI:30616"/>
    </ligand>
</feature>
<feature type="site" description="Required for activity" evidence="1">
    <location>
        <position position="373"/>
    </location>
</feature>
<organism>
    <name type="scientific">Escherichia coli O8 (strain IAI1)</name>
    <dbReference type="NCBI Taxonomy" id="585034"/>
    <lineage>
        <taxon>Bacteria</taxon>
        <taxon>Pseudomonadati</taxon>
        <taxon>Pseudomonadota</taxon>
        <taxon>Gammaproteobacteria</taxon>
        <taxon>Enterobacterales</taxon>
        <taxon>Enterobacteriaceae</taxon>
        <taxon>Escherichia</taxon>
    </lineage>
</organism>
<reference key="1">
    <citation type="journal article" date="2009" name="PLoS Genet.">
        <title>Organised genome dynamics in the Escherichia coli species results in highly diverse adaptive paths.</title>
        <authorList>
            <person name="Touchon M."/>
            <person name="Hoede C."/>
            <person name="Tenaillon O."/>
            <person name="Barbe V."/>
            <person name="Baeriswyl S."/>
            <person name="Bidet P."/>
            <person name="Bingen E."/>
            <person name="Bonacorsi S."/>
            <person name="Bouchier C."/>
            <person name="Bouvet O."/>
            <person name="Calteau A."/>
            <person name="Chiapello H."/>
            <person name="Clermont O."/>
            <person name="Cruveiller S."/>
            <person name="Danchin A."/>
            <person name="Diard M."/>
            <person name="Dossat C."/>
            <person name="Karoui M.E."/>
            <person name="Frapy E."/>
            <person name="Garry L."/>
            <person name="Ghigo J.M."/>
            <person name="Gilles A.M."/>
            <person name="Johnson J."/>
            <person name="Le Bouguenec C."/>
            <person name="Lescat M."/>
            <person name="Mangenot S."/>
            <person name="Martinez-Jehanne V."/>
            <person name="Matic I."/>
            <person name="Nassif X."/>
            <person name="Oztas S."/>
            <person name="Petit M.A."/>
            <person name="Pichon C."/>
            <person name="Rouy Z."/>
            <person name="Ruf C.S."/>
            <person name="Schneider D."/>
            <person name="Tourret J."/>
            <person name="Vacherie B."/>
            <person name="Vallenet D."/>
            <person name="Medigue C."/>
            <person name="Rocha E.P.C."/>
            <person name="Denamur E."/>
        </authorList>
    </citation>
    <scope>NUCLEOTIDE SEQUENCE [LARGE SCALE GENOMIC DNA]</scope>
    <source>
        <strain>IAI1</strain>
    </source>
</reference>
<name>ATPA_ECO8A</name>
<protein>
    <recommendedName>
        <fullName evidence="1">ATP synthase subunit alpha</fullName>
        <ecNumber evidence="1">7.1.2.2</ecNumber>
    </recommendedName>
    <alternativeName>
        <fullName evidence="1">ATP synthase F1 sector subunit alpha</fullName>
    </alternativeName>
    <alternativeName>
        <fullName evidence="1">F-ATPase subunit alpha</fullName>
    </alternativeName>
</protein>
<accession>B7M590</accession>
<keyword id="KW-0066">ATP synthesis</keyword>
<keyword id="KW-0067">ATP-binding</keyword>
<keyword id="KW-0997">Cell inner membrane</keyword>
<keyword id="KW-1003">Cell membrane</keyword>
<keyword id="KW-0139">CF(1)</keyword>
<keyword id="KW-0375">Hydrogen ion transport</keyword>
<keyword id="KW-0406">Ion transport</keyword>
<keyword id="KW-0472">Membrane</keyword>
<keyword id="KW-0547">Nucleotide-binding</keyword>
<keyword id="KW-1278">Translocase</keyword>
<keyword id="KW-0813">Transport</keyword>
<proteinExistence type="inferred from homology"/>
<evidence type="ECO:0000255" key="1">
    <source>
        <dbReference type="HAMAP-Rule" id="MF_01346"/>
    </source>
</evidence>
<comment type="function">
    <text evidence="1">Produces ATP from ADP in the presence of a proton gradient across the membrane. The alpha chain is a regulatory subunit.</text>
</comment>
<comment type="catalytic activity">
    <reaction evidence="1">
        <text>ATP + H2O + 4 H(+)(in) = ADP + phosphate + 5 H(+)(out)</text>
        <dbReference type="Rhea" id="RHEA:57720"/>
        <dbReference type="ChEBI" id="CHEBI:15377"/>
        <dbReference type="ChEBI" id="CHEBI:15378"/>
        <dbReference type="ChEBI" id="CHEBI:30616"/>
        <dbReference type="ChEBI" id="CHEBI:43474"/>
        <dbReference type="ChEBI" id="CHEBI:456216"/>
        <dbReference type="EC" id="7.1.2.2"/>
    </reaction>
</comment>
<comment type="subunit">
    <text evidence="1">F-type ATPases have 2 components, CF(1) - the catalytic core - and CF(0) - the membrane proton channel. CF(1) has five subunits: alpha(3), beta(3), gamma(1), delta(1), epsilon(1). CF(0) has three main subunits: a(1), b(2) and c(9-12). The alpha and beta chains form an alternating ring which encloses part of the gamma chain. CF(1) is attached to CF(0) by a central stalk formed by the gamma and epsilon chains, while a peripheral stalk is formed by the delta and b chains.</text>
</comment>
<comment type="subcellular location">
    <subcellularLocation>
        <location evidence="1">Cell inner membrane</location>
        <topology evidence="1">Peripheral membrane protein</topology>
    </subcellularLocation>
</comment>
<comment type="similarity">
    <text evidence="1">Belongs to the ATPase alpha/beta chains family.</text>
</comment>